<dbReference type="EC" id="2.1.3.-" evidence="1"/>
<dbReference type="EMBL" id="CP000713">
    <property type="protein sequence ID" value="ABQ93245.1"/>
    <property type="molecule type" value="Genomic_DNA"/>
</dbReference>
<dbReference type="SMR" id="A5WC54"/>
<dbReference type="STRING" id="349106.PsycPRwf_0290"/>
<dbReference type="KEGG" id="prw:PsycPRwf_0290"/>
<dbReference type="eggNOG" id="COG4106">
    <property type="taxonomic scope" value="Bacteria"/>
</dbReference>
<dbReference type="HOGENOM" id="CLU_078475_0_0_6"/>
<dbReference type="GO" id="GO:0016743">
    <property type="term" value="F:carboxyl- or carbamoyltransferase activity"/>
    <property type="evidence" value="ECO:0007669"/>
    <property type="project" value="UniProtKB-UniRule"/>
</dbReference>
<dbReference type="GO" id="GO:1904047">
    <property type="term" value="F:S-adenosyl-L-methionine binding"/>
    <property type="evidence" value="ECO:0007669"/>
    <property type="project" value="UniProtKB-UniRule"/>
</dbReference>
<dbReference type="GO" id="GO:0002098">
    <property type="term" value="P:tRNA wobble uridine modification"/>
    <property type="evidence" value="ECO:0007669"/>
    <property type="project" value="InterPro"/>
</dbReference>
<dbReference type="CDD" id="cd02440">
    <property type="entry name" value="AdoMet_MTases"/>
    <property type="match status" value="1"/>
</dbReference>
<dbReference type="Gene3D" id="3.40.50.150">
    <property type="entry name" value="Vaccinia Virus protein VP39"/>
    <property type="match status" value="1"/>
</dbReference>
<dbReference type="HAMAP" id="MF_01589">
    <property type="entry name" value="Cx_SAM_synthase"/>
    <property type="match status" value="1"/>
</dbReference>
<dbReference type="InterPro" id="IPR005271">
    <property type="entry name" value="CmoA"/>
</dbReference>
<dbReference type="InterPro" id="IPR041698">
    <property type="entry name" value="Methyltransf_25"/>
</dbReference>
<dbReference type="InterPro" id="IPR029063">
    <property type="entry name" value="SAM-dependent_MTases_sf"/>
</dbReference>
<dbReference type="NCBIfam" id="TIGR00740">
    <property type="entry name" value="carboxy-S-adenosyl-L-methionine synthase CmoA"/>
    <property type="match status" value="1"/>
</dbReference>
<dbReference type="PANTHER" id="PTHR43861:SF2">
    <property type="entry name" value="CARBOXY-S-ADENOSYL-L-METHIONINE SYNTHASE"/>
    <property type="match status" value="1"/>
</dbReference>
<dbReference type="PANTHER" id="PTHR43861">
    <property type="entry name" value="TRANS-ACONITATE 2-METHYLTRANSFERASE-RELATED"/>
    <property type="match status" value="1"/>
</dbReference>
<dbReference type="Pfam" id="PF13649">
    <property type="entry name" value="Methyltransf_25"/>
    <property type="match status" value="1"/>
</dbReference>
<dbReference type="PIRSF" id="PIRSF006325">
    <property type="entry name" value="MeTrfase_bac"/>
    <property type="match status" value="1"/>
</dbReference>
<dbReference type="SUPFAM" id="SSF53335">
    <property type="entry name" value="S-adenosyl-L-methionine-dependent methyltransferases"/>
    <property type="match status" value="1"/>
</dbReference>
<evidence type="ECO:0000255" key="1">
    <source>
        <dbReference type="HAMAP-Rule" id="MF_01589"/>
    </source>
</evidence>
<protein>
    <recommendedName>
        <fullName evidence="1">Carboxy-S-adenosyl-L-methionine synthase</fullName>
        <shortName evidence="1">Cx-SAM synthase</shortName>
        <ecNumber evidence="1">2.1.3.-</ecNumber>
    </recommendedName>
</protein>
<proteinExistence type="inferred from homology"/>
<organism>
    <name type="scientific">Psychrobacter sp. (strain PRwf-1)</name>
    <dbReference type="NCBI Taxonomy" id="349106"/>
    <lineage>
        <taxon>Bacteria</taxon>
        <taxon>Pseudomonadati</taxon>
        <taxon>Pseudomonadota</taxon>
        <taxon>Gammaproteobacteria</taxon>
        <taxon>Moraxellales</taxon>
        <taxon>Moraxellaceae</taxon>
        <taxon>Psychrobacter</taxon>
    </lineage>
</organism>
<accession>A5WC54</accession>
<name>CMOA_PSYWF</name>
<gene>
    <name evidence="1" type="primary">cmoA</name>
    <name type="ordered locus">PsycPRwf_0290</name>
</gene>
<keyword id="KW-0949">S-adenosyl-L-methionine</keyword>
<keyword id="KW-0808">Transferase</keyword>
<reference key="1">
    <citation type="submission" date="2007-05" db="EMBL/GenBank/DDBJ databases">
        <title>Complete sequence of chromosome of Psychrobacter sp. PRwf-1.</title>
        <authorList>
            <consortium name="US DOE Joint Genome Institute"/>
            <person name="Copeland A."/>
            <person name="Lucas S."/>
            <person name="Lapidus A."/>
            <person name="Barry K."/>
            <person name="Detter J.C."/>
            <person name="Glavina del Rio T."/>
            <person name="Hammon N."/>
            <person name="Israni S."/>
            <person name="Dalin E."/>
            <person name="Tice H."/>
            <person name="Pitluck S."/>
            <person name="Chain P."/>
            <person name="Malfatti S."/>
            <person name="Shin M."/>
            <person name="Vergez L."/>
            <person name="Schmutz J."/>
            <person name="Larimer F."/>
            <person name="Land M."/>
            <person name="Hauser L."/>
            <person name="Kyrpides N."/>
            <person name="Kim E."/>
            <person name="Tiedje J."/>
            <person name="Richardson P."/>
        </authorList>
    </citation>
    <scope>NUCLEOTIDE SEQUENCE [LARGE SCALE GENOMIC DNA]</scope>
    <source>
        <strain>PRwf-1</strain>
    </source>
</reference>
<feature type="chain" id="PRO_0000381962" description="Carboxy-S-adenosyl-L-methionine synthase">
    <location>
        <begin position="1"/>
        <end position="274"/>
    </location>
</feature>
<feature type="binding site" evidence="1">
    <location>
        <position position="59"/>
    </location>
    <ligand>
        <name>S-adenosyl-L-methionine</name>
        <dbReference type="ChEBI" id="CHEBI:59789"/>
    </ligand>
</feature>
<feature type="binding site" evidence="1">
    <location>
        <begin position="93"/>
        <end position="95"/>
    </location>
    <ligand>
        <name>S-adenosyl-L-methionine</name>
        <dbReference type="ChEBI" id="CHEBI:59789"/>
    </ligand>
</feature>
<feature type="binding site" evidence="1">
    <location>
        <begin position="149"/>
        <end position="150"/>
    </location>
    <ligand>
        <name>S-adenosyl-L-methionine</name>
        <dbReference type="ChEBI" id="CHEBI:59789"/>
    </ligand>
</feature>
<feature type="binding site" evidence="1">
    <location>
        <position position="164"/>
    </location>
    <ligand>
        <name>S-adenosyl-L-methionine</name>
        <dbReference type="ChEBI" id="CHEBI:59789"/>
    </ligand>
</feature>
<feature type="binding site" evidence="1">
    <location>
        <position position="231"/>
    </location>
    <ligand>
        <name>S-adenosyl-L-methionine</name>
        <dbReference type="ChEBI" id="CHEBI:59789"/>
    </ligand>
</feature>
<sequence>MSNTTDADAKHPQSNILVEETVVYDNVFTTPLDKAARFSFDEQVVACFPDMIRRSVPGYGQMLAMLPIFAKRHCQAGQVNAEGKRVSRVYDLGCSLGGATMALLNEKGGFGKEELQIKAVDISPAMTQKAEVLLQQNYPEHDIEVITADIRGFELEPCDMVILNLTLQFLPPADRTQVLQSIYNALNDGGILVLTEKTHTGDEQDDAWLVERYYDFKRANGYSELEISGKRNALENVLITDTLDQHHQRLAEVGFNRSLTWFQFLNFASMVAFK</sequence>
<comment type="function">
    <text evidence="1">Catalyzes the conversion of S-adenosyl-L-methionine (SAM) to carboxy-S-adenosyl-L-methionine (Cx-SAM).</text>
</comment>
<comment type="catalytic activity">
    <reaction evidence="1">
        <text>prephenate + S-adenosyl-L-methionine = carboxy-S-adenosyl-L-methionine + 3-phenylpyruvate + H2O</text>
        <dbReference type="Rhea" id="RHEA:51692"/>
        <dbReference type="ChEBI" id="CHEBI:15377"/>
        <dbReference type="ChEBI" id="CHEBI:18005"/>
        <dbReference type="ChEBI" id="CHEBI:29934"/>
        <dbReference type="ChEBI" id="CHEBI:59789"/>
        <dbReference type="ChEBI" id="CHEBI:134278"/>
    </reaction>
</comment>
<comment type="subunit">
    <text evidence="1">Homodimer.</text>
</comment>
<comment type="similarity">
    <text evidence="1">Belongs to the class I-like SAM-binding methyltransferase superfamily. Cx-SAM synthase family.</text>
</comment>